<organism>
    <name type="scientific">Rickettsia rickettsii (strain Iowa)</name>
    <dbReference type="NCBI Taxonomy" id="452659"/>
    <lineage>
        <taxon>Bacteria</taxon>
        <taxon>Pseudomonadati</taxon>
        <taxon>Pseudomonadota</taxon>
        <taxon>Alphaproteobacteria</taxon>
        <taxon>Rickettsiales</taxon>
        <taxon>Rickettsiaceae</taxon>
        <taxon>Rickettsieae</taxon>
        <taxon>Rickettsia</taxon>
        <taxon>spotted fever group</taxon>
    </lineage>
</organism>
<proteinExistence type="inferred from homology"/>
<keyword id="KW-0963">Cytoplasm</keyword>
<keyword id="KW-0448">Lipopolysaccharide biosynthesis</keyword>
<keyword id="KW-0808">Transferase</keyword>
<name>KDSA_RICRO</name>
<dbReference type="EC" id="2.5.1.55" evidence="1"/>
<dbReference type="EMBL" id="CP000766">
    <property type="protein sequence ID" value="ABY72035.1"/>
    <property type="molecule type" value="Genomic_DNA"/>
</dbReference>
<dbReference type="RefSeq" id="WP_012150315.1">
    <property type="nucleotide sequence ID" value="NC_010263.3"/>
</dbReference>
<dbReference type="SMR" id="B0BW09"/>
<dbReference type="GeneID" id="79936891"/>
<dbReference type="KEGG" id="rrj:RrIowa_0115"/>
<dbReference type="eggNOG" id="COG2877">
    <property type="taxonomic scope" value="Bacteria"/>
</dbReference>
<dbReference type="HOGENOM" id="CLU_036666_0_0_5"/>
<dbReference type="UniPathway" id="UPA00030"/>
<dbReference type="UniPathway" id="UPA00357">
    <property type="reaction ID" value="UER00474"/>
</dbReference>
<dbReference type="Proteomes" id="UP000000796">
    <property type="component" value="Chromosome"/>
</dbReference>
<dbReference type="GO" id="GO:0005737">
    <property type="term" value="C:cytoplasm"/>
    <property type="evidence" value="ECO:0007669"/>
    <property type="project" value="UniProtKB-SubCell"/>
</dbReference>
<dbReference type="GO" id="GO:0008676">
    <property type="term" value="F:3-deoxy-8-phosphooctulonate synthase activity"/>
    <property type="evidence" value="ECO:0007669"/>
    <property type="project" value="UniProtKB-UniRule"/>
</dbReference>
<dbReference type="GO" id="GO:0019294">
    <property type="term" value="P:keto-3-deoxy-D-manno-octulosonic acid biosynthetic process"/>
    <property type="evidence" value="ECO:0007669"/>
    <property type="project" value="UniProtKB-UniRule"/>
</dbReference>
<dbReference type="Gene3D" id="3.20.20.70">
    <property type="entry name" value="Aldolase class I"/>
    <property type="match status" value="1"/>
</dbReference>
<dbReference type="HAMAP" id="MF_00056">
    <property type="entry name" value="KDO8P_synth"/>
    <property type="match status" value="1"/>
</dbReference>
<dbReference type="InterPro" id="IPR013785">
    <property type="entry name" value="Aldolase_TIM"/>
</dbReference>
<dbReference type="InterPro" id="IPR006218">
    <property type="entry name" value="DAHP1/KDSA"/>
</dbReference>
<dbReference type="InterPro" id="IPR006269">
    <property type="entry name" value="KDO8P_synthase"/>
</dbReference>
<dbReference type="NCBIfam" id="TIGR01362">
    <property type="entry name" value="KDO8P_synth"/>
    <property type="match status" value="1"/>
</dbReference>
<dbReference type="NCBIfam" id="NF003543">
    <property type="entry name" value="PRK05198.1"/>
    <property type="match status" value="1"/>
</dbReference>
<dbReference type="PANTHER" id="PTHR21057">
    <property type="entry name" value="PHOSPHO-2-DEHYDRO-3-DEOXYHEPTONATE ALDOLASE"/>
    <property type="match status" value="1"/>
</dbReference>
<dbReference type="Pfam" id="PF00793">
    <property type="entry name" value="DAHP_synth_1"/>
    <property type="match status" value="1"/>
</dbReference>
<dbReference type="SUPFAM" id="SSF51569">
    <property type="entry name" value="Aldolase"/>
    <property type="match status" value="1"/>
</dbReference>
<gene>
    <name evidence="1" type="primary">kdsA</name>
    <name type="ordered locus">RrIowa_0115</name>
</gene>
<accession>B0BW09</accession>
<protein>
    <recommendedName>
        <fullName evidence="1">2-dehydro-3-deoxyphosphooctonate aldolase</fullName>
        <ecNumber evidence="1">2.5.1.55</ecNumber>
    </recommendedName>
    <alternativeName>
        <fullName evidence="1">3-deoxy-D-manno-octulosonic acid 8-phosphate synthase</fullName>
    </alternativeName>
    <alternativeName>
        <fullName evidence="1">KDO-8-phosphate synthase</fullName>
        <shortName evidence="1">KDO 8-P synthase</shortName>
        <shortName evidence="1">KDOPS</shortName>
    </alternativeName>
    <alternativeName>
        <fullName evidence="1">Phospho-2-dehydro-3-deoxyoctonate aldolase</fullName>
    </alternativeName>
</protein>
<feature type="chain" id="PRO_1000074986" description="2-dehydro-3-deoxyphosphooctonate aldolase">
    <location>
        <begin position="1"/>
        <end position="274"/>
    </location>
</feature>
<reference key="1">
    <citation type="journal article" date="2008" name="Infect. Immun.">
        <title>Genomic comparison of virulent Rickettsia rickettsii Sheila Smith and avirulent Rickettsia rickettsii Iowa.</title>
        <authorList>
            <person name="Ellison D.W."/>
            <person name="Clark T.R."/>
            <person name="Sturdevant D.E."/>
            <person name="Virtaneva K."/>
            <person name="Porcella S.F."/>
            <person name="Hackstadt T."/>
        </authorList>
    </citation>
    <scope>NUCLEOTIDE SEQUENCE [LARGE SCALE GENOMIC DNA]</scope>
    <source>
        <strain>Iowa</strain>
    </source>
</reference>
<comment type="catalytic activity">
    <reaction evidence="1">
        <text>D-arabinose 5-phosphate + phosphoenolpyruvate + H2O = 3-deoxy-alpha-D-manno-2-octulosonate-8-phosphate + phosphate</text>
        <dbReference type="Rhea" id="RHEA:14053"/>
        <dbReference type="ChEBI" id="CHEBI:15377"/>
        <dbReference type="ChEBI" id="CHEBI:43474"/>
        <dbReference type="ChEBI" id="CHEBI:57693"/>
        <dbReference type="ChEBI" id="CHEBI:58702"/>
        <dbReference type="ChEBI" id="CHEBI:85985"/>
        <dbReference type="EC" id="2.5.1.55"/>
    </reaction>
</comment>
<comment type="pathway">
    <text evidence="1">Carbohydrate biosynthesis; 3-deoxy-D-manno-octulosonate biosynthesis; 3-deoxy-D-manno-octulosonate from D-ribulose 5-phosphate: step 2/3.</text>
</comment>
<comment type="pathway">
    <text evidence="1">Bacterial outer membrane biogenesis; lipopolysaccharide biosynthesis.</text>
</comment>
<comment type="subcellular location">
    <subcellularLocation>
        <location evidence="1">Cytoplasm</location>
    </subcellularLocation>
</comment>
<comment type="similarity">
    <text evidence="1">Belongs to the KdsA family.</text>
</comment>
<evidence type="ECO:0000255" key="1">
    <source>
        <dbReference type="HAMAP-Rule" id="MF_00056"/>
    </source>
</evidence>
<sequence>MQKVVKLNNIKIGNDLPFVLITGPCQIEGKDHALFMAEKLVKLTSKLEIPFIYKSSFDKANRTSVHGIRGVGIEKGLEILSKVKSEFDCPIVTDVHSESQCTATAEVADILQIPAFLCRQTDLLQAAAKTGKIVKVKKGQFLAPWDMKNVQTKLETFGVKDILFTERGACFGYNNLVSDMRSLAIMAELNVPVVFDATHSVQQPGGLGGSTGGERKYVELLAKAATSVGIAGMYMEVHQDPDNAPSDGPCMMKLDNLESILIKLKKYDKITKEK</sequence>